<keyword id="KW-0067">ATP-binding</keyword>
<keyword id="KW-0418">Kinase</keyword>
<keyword id="KW-0441">Lipid A biosynthesis</keyword>
<keyword id="KW-0444">Lipid biosynthesis</keyword>
<keyword id="KW-0443">Lipid metabolism</keyword>
<keyword id="KW-0547">Nucleotide-binding</keyword>
<keyword id="KW-1185">Reference proteome</keyword>
<keyword id="KW-0808">Transferase</keyword>
<organism>
    <name type="scientific">Alkalilimnicola ehrlichii (strain ATCC BAA-1101 / DSM 17681 / MLHE-1)</name>
    <dbReference type="NCBI Taxonomy" id="187272"/>
    <lineage>
        <taxon>Bacteria</taxon>
        <taxon>Pseudomonadati</taxon>
        <taxon>Pseudomonadota</taxon>
        <taxon>Gammaproteobacteria</taxon>
        <taxon>Chromatiales</taxon>
        <taxon>Ectothiorhodospiraceae</taxon>
        <taxon>Alkalilimnicola</taxon>
    </lineage>
</organism>
<name>LPXK_ALKEH</name>
<comment type="function">
    <text evidence="1">Transfers the gamma-phosphate of ATP to the 4'-position of a tetraacyldisaccharide 1-phosphate intermediate (termed DS-1-P) to form tetraacyldisaccharide 1,4'-bis-phosphate (lipid IVA).</text>
</comment>
<comment type="catalytic activity">
    <reaction evidence="1">
        <text>a lipid A disaccharide + ATP = a lipid IVA + ADP + H(+)</text>
        <dbReference type="Rhea" id="RHEA:67840"/>
        <dbReference type="ChEBI" id="CHEBI:15378"/>
        <dbReference type="ChEBI" id="CHEBI:30616"/>
        <dbReference type="ChEBI" id="CHEBI:176343"/>
        <dbReference type="ChEBI" id="CHEBI:176425"/>
        <dbReference type="ChEBI" id="CHEBI:456216"/>
        <dbReference type="EC" id="2.7.1.130"/>
    </reaction>
</comment>
<comment type="pathway">
    <text evidence="1">Glycolipid biosynthesis; lipid IV(A) biosynthesis; lipid IV(A) from (3R)-3-hydroxytetradecanoyl-[acyl-carrier-protein] and UDP-N-acetyl-alpha-D-glucosamine: step 6/6.</text>
</comment>
<comment type="similarity">
    <text evidence="1">Belongs to the LpxK family.</text>
</comment>
<feature type="chain" id="PRO_0000291192" description="Tetraacyldisaccharide 4'-kinase">
    <location>
        <begin position="1"/>
        <end position="331"/>
    </location>
</feature>
<feature type="binding site" evidence="1">
    <location>
        <begin position="59"/>
        <end position="66"/>
    </location>
    <ligand>
        <name>ATP</name>
        <dbReference type="ChEBI" id="CHEBI:30616"/>
    </ligand>
</feature>
<accession>Q0A8Q4</accession>
<dbReference type="EC" id="2.7.1.130" evidence="1"/>
<dbReference type="EMBL" id="CP000453">
    <property type="protein sequence ID" value="ABI56783.1"/>
    <property type="molecule type" value="Genomic_DNA"/>
</dbReference>
<dbReference type="RefSeq" id="WP_011629178.1">
    <property type="nucleotide sequence ID" value="NC_008340.1"/>
</dbReference>
<dbReference type="SMR" id="Q0A8Q4"/>
<dbReference type="KEGG" id="aeh:Mlg_1434"/>
<dbReference type="eggNOG" id="COG1663">
    <property type="taxonomic scope" value="Bacteria"/>
</dbReference>
<dbReference type="HOGENOM" id="CLU_038816_2_0_6"/>
<dbReference type="OrthoDB" id="9766423at2"/>
<dbReference type="UniPathway" id="UPA00359">
    <property type="reaction ID" value="UER00482"/>
</dbReference>
<dbReference type="Proteomes" id="UP000001962">
    <property type="component" value="Chromosome"/>
</dbReference>
<dbReference type="GO" id="GO:0005886">
    <property type="term" value="C:plasma membrane"/>
    <property type="evidence" value="ECO:0007669"/>
    <property type="project" value="TreeGrafter"/>
</dbReference>
<dbReference type="GO" id="GO:0005524">
    <property type="term" value="F:ATP binding"/>
    <property type="evidence" value="ECO:0007669"/>
    <property type="project" value="UniProtKB-UniRule"/>
</dbReference>
<dbReference type="GO" id="GO:0009029">
    <property type="term" value="F:tetraacyldisaccharide 4'-kinase activity"/>
    <property type="evidence" value="ECO:0007669"/>
    <property type="project" value="UniProtKB-UniRule"/>
</dbReference>
<dbReference type="GO" id="GO:0009245">
    <property type="term" value="P:lipid A biosynthetic process"/>
    <property type="evidence" value="ECO:0007669"/>
    <property type="project" value="UniProtKB-UniRule"/>
</dbReference>
<dbReference type="GO" id="GO:0009244">
    <property type="term" value="P:lipopolysaccharide core region biosynthetic process"/>
    <property type="evidence" value="ECO:0007669"/>
    <property type="project" value="TreeGrafter"/>
</dbReference>
<dbReference type="CDD" id="cd01983">
    <property type="entry name" value="SIMIBI"/>
    <property type="match status" value="1"/>
</dbReference>
<dbReference type="HAMAP" id="MF_00409">
    <property type="entry name" value="LpxK"/>
    <property type="match status" value="1"/>
</dbReference>
<dbReference type="InterPro" id="IPR003758">
    <property type="entry name" value="LpxK"/>
</dbReference>
<dbReference type="InterPro" id="IPR027417">
    <property type="entry name" value="P-loop_NTPase"/>
</dbReference>
<dbReference type="NCBIfam" id="TIGR00682">
    <property type="entry name" value="lpxK"/>
    <property type="match status" value="1"/>
</dbReference>
<dbReference type="PANTHER" id="PTHR42724">
    <property type="entry name" value="TETRAACYLDISACCHARIDE 4'-KINASE"/>
    <property type="match status" value="1"/>
</dbReference>
<dbReference type="PANTHER" id="PTHR42724:SF1">
    <property type="entry name" value="TETRAACYLDISACCHARIDE 4'-KINASE, MITOCHONDRIAL-RELATED"/>
    <property type="match status" value="1"/>
</dbReference>
<dbReference type="Pfam" id="PF02606">
    <property type="entry name" value="LpxK"/>
    <property type="match status" value="1"/>
</dbReference>
<dbReference type="SUPFAM" id="SSF52540">
    <property type="entry name" value="P-loop containing nucleoside triphosphate hydrolases"/>
    <property type="match status" value="1"/>
</dbReference>
<evidence type="ECO:0000255" key="1">
    <source>
        <dbReference type="HAMAP-Rule" id="MF_00409"/>
    </source>
</evidence>
<reference key="1">
    <citation type="submission" date="2006-08" db="EMBL/GenBank/DDBJ databases">
        <title>Complete sequence of Alkalilimnicola ehrilichei MLHE-1.</title>
        <authorList>
            <person name="Copeland A."/>
            <person name="Lucas S."/>
            <person name="Lapidus A."/>
            <person name="Barry K."/>
            <person name="Detter J.C."/>
            <person name="Glavina del Rio T."/>
            <person name="Hammon N."/>
            <person name="Israni S."/>
            <person name="Dalin E."/>
            <person name="Tice H."/>
            <person name="Pitluck S."/>
            <person name="Sims D."/>
            <person name="Brettin T."/>
            <person name="Bruce D."/>
            <person name="Han C."/>
            <person name="Tapia R."/>
            <person name="Gilna P."/>
            <person name="Schmutz J."/>
            <person name="Larimer F."/>
            <person name="Land M."/>
            <person name="Hauser L."/>
            <person name="Kyrpides N."/>
            <person name="Mikhailova N."/>
            <person name="Oremland R.S."/>
            <person name="Hoeft S.E."/>
            <person name="Switzer-Blum J."/>
            <person name="Kulp T."/>
            <person name="King G."/>
            <person name="Tabita R."/>
            <person name="Witte B."/>
            <person name="Santini J.M."/>
            <person name="Basu P."/>
            <person name="Hollibaugh J.T."/>
            <person name="Xie G."/>
            <person name="Stolz J.F."/>
            <person name="Richardson P."/>
        </authorList>
    </citation>
    <scope>NUCLEOTIDE SEQUENCE [LARGE SCALE GENOMIC DNA]</scope>
    <source>
        <strain>ATCC BAA-1101 / DSM 17681 / MLHE-1</strain>
    </source>
</reference>
<sequence length="331" mass="35790">MSELPAFWLRRPPDWRAHALRPLAALYGGVMRLRRYGYRKGWIRRGRLPVPVVVVGNIFVGGTGKTPLVAWIADTLAAMGRRPGIVSRGYGGRSREWPRRVAADSDPAEVGDEPLLLARGTGCPVAVGPDRVAAAQLLLAAGCDVVVSDDGLQHYRLPRALELVVCDGHRGLGNGLCLPAGPLREPADRLADVDMVISNGRAPALTPWWFELVPGPLRPLAADAAPEGGPEPGTTVHAVAGIGHPARFFATLEGLGYRVIPHPFPDHHPYRAGELRFGDDRPVIMTEKDAVKCAGLAPARSWFLPVEARPEPATRERLEASLARLHSLTNR</sequence>
<proteinExistence type="inferred from homology"/>
<gene>
    <name evidence="1" type="primary">lpxK</name>
    <name type="ordered locus">Mlg_1434</name>
</gene>
<protein>
    <recommendedName>
        <fullName evidence="1">Tetraacyldisaccharide 4'-kinase</fullName>
        <ecNumber evidence="1">2.7.1.130</ecNumber>
    </recommendedName>
    <alternativeName>
        <fullName evidence="1">Lipid A 4'-kinase</fullName>
    </alternativeName>
</protein>